<feature type="signal peptide" evidence="1">
    <location>
        <begin position="1"/>
        <end position="22"/>
    </location>
</feature>
<feature type="chain" id="PRO_0000020573" description="21 kDa protein">
    <location>
        <begin position="23"/>
        <end position="193"/>
    </location>
</feature>
<keyword id="KW-0732">Signal</keyword>
<proteinExistence type="evidence at transcript level"/>
<name>21KD_DAUCA</name>
<protein>
    <recommendedName>
        <fullName>21 kDa protein</fullName>
    </recommendedName>
    <alternativeName>
        <fullName>1.2 protein</fullName>
    </alternativeName>
</protein>
<accession>P17407</accession>
<evidence type="ECO:0000255" key="1"/>
<reference key="1">
    <citation type="submission" date="1990-04" db="EMBL/GenBank/DDBJ databases">
        <authorList>
            <person name="Aleith F."/>
        </authorList>
    </citation>
    <scope>NUCLEOTIDE SEQUENCE [MRNA]</scope>
</reference>
<sequence length="193" mass="21041">MKLSKSTLVFSALLVILAAASAAPANQFIKTSCTLTTYPAVCEQSLSAYAKTIQNNPQELASTALQVSLTRTQQAQTFMKRLNKFKGLKARQYAAIHDCLEEVEDSLDRVSRSCDEMKNLSHAKGNDFTFRMSNVETWVSAALTDETTCMDGFAGKGMDGKIKESVRAQVVAVARVTSNALALVNNFAAKHKH</sequence>
<dbReference type="EMBL" id="X52395">
    <property type="protein sequence ID" value="CAA36642.1"/>
    <property type="molecule type" value="mRNA"/>
</dbReference>
<dbReference type="PIR" id="S10911">
    <property type="entry name" value="S10911"/>
</dbReference>
<dbReference type="SMR" id="P17407"/>
<dbReference type="GO" id="GO:0004857">
    <property type="term" value="F:enzyme inhibitor activity"/>
    <property type="evidence" value="ECO:0007669"/>
    <property type="project" value="InterPro"/>
</dbReference>
<dbReference type="CDD" id="cd15798">
    <property type="entry name" value="PMEI-like_3"/>
    <property type="match status" value="1"/>
</dbReference>
<dbReference type="FunFam" id="1.20.140.40:FF:000005">
    <property type="entry name" value="Pectin methylesterase inhibitor 1"/>
    <property type="match status" value="1"/>
</dbReference>
<dbReference type="Gene3D" id="1.20.140.40">
    <property type="entry name" value="Invertase/pectin methylesterase inhibitor family protein"/>
    <property type="match status" value="1"/>
</dbReference>
<dbReference type="InterPro" id="IPR035513">
    <property type="entry name" value="Invertase/methylesterase_inhib"/>
</dbReference>
<dbReference type="InterPro" id="IPR006501">
    <property type="entry name" value="Pectinesterase_inhib_dom"/>
</dbReference>
<dbReference type="InterPro" id="IPR051955">
    <property type="entry name" value="PME_Inhibitor"/>
</dbReference>
<dbReference type="NCBIfam" id="TIGR01614">
    <property type="entry name" value="PME_inhib"/>
    <property type="match status" value="1"/>
</dbReference>
<dbReference type="PANTHER" id="PTHR31080:SF87">
    <property type="entry name" value="PECTINESTERASE INHIBITOR 7"/>
    <property type="match status" value="1"/>
</dbReference>
<dbReference type="PANTHER" id="PTHR31080">
    <property type="entry name" value="PECTINESTERASE INHIBITOR-LIKE"/>
    <property type="match status" value="1"/>
</dbReference>
<dbReference type="Pfam" id="PF04043">
    <property type="entry name" value="PMEI"/>
    <property type="match status" value="1"/>
</dbReference>
<dbReference type="SMART" id="SM00856">
    <property type="entry name" value="PMEI"/>
    <property type="match status" value="1"/>
</dbReference>
<dbReference type="SUPFAM" id="SSF101148">
    <property type="entry name" value="Plant invertase/pectin methylesterase inhibitor"/>
    <property type="match status" value="1"/>
</dbReference>
<organism>
    <name type="scientific">Daucus carota</name>
    <name type="common">Wild carrot</name>
    <dbReference type="NCBI Taxonomy" id="4039"/>
    <lineage>
        <taxon>Eukaryota</taxon>
        <taxon>Viridiplantae</taxon>
        <taxon>Streptophyta</taxon>
        <taxon>Embryophyta</taxon>
        <taxon>Tracheophyta</taxon>
        <taxon>Spermatophyta</taxon>
        <taxon>Magnoliopsida</taxon>
        <taxon>eudicotyledons</taxon>
        <taxon>Gunneridae</taxon>
        <taxon>Pentapetalae</taxon>
        <taxon>asterids</taxon>
        <taxon>campanulids</taxon>
        <taxon>Apiales</taxon>
        <taxon>Apiaceae</taxon>
        <taxon>Apioideae</taxon>
        <taxon>Scandiceae</taxon>
        <taxon>Daucinae</taxon>
        <taxon>Daucus</taxon>
        <taxon>Daucus sect. Daucus</taxon>
    </lineage>
</organism>